<reference key="1">
    <citation type="journal article" date="2007" name="Science">
        <title>The Calyptogena magnifica chemoautotrophic symbiont genome.</title>
        <authorList>
            <person name="Newton I.L.G."/>
            <person name="Woyke T."/>
            <person name="Auchtung T.A."/>
            <person name="Dilly G.F."/>
            <person name="Dutton R.J."/>
            <person name="Fisher M.C."/>
            <person name="Fontanez K.M."/>
            <person name="Lau E."/>
            <person name="Stewart F.J."/>
            <person name="Richardson P.M."/>
            <person name="Barry K.W."/>
            <person name="Saunders E."/>
            <person name="Detter J.C."/>
            <person name="Wu D."/>
            <person name="Eisen J.A."/>
            <person name="Cavanaugh C.M."/>
        </authorList>
    </citation>
    <scope>NUCLEOTIDE SEQUENCE [LARGE SCALE GENOMIC DNA]</scope>
</reference>
<feature type="chain" id="PRO_0000319531" description="ATP phosphoribosyltransferase">
    <location>
        <begin position="1"/>
        <end position="205"/>
    </location>
</feature>
<evidence type="ECO:0000255" key="1">
    <source>
        <dbReference type="HAMAP-Rule" id="MF_01018"/>
    </source>
</evidence>
<proteinExistence type="inferred from homology"/>
<gene>
    <name evidence="1" type="primary">hisG</name>
    <name type="ordered locus">Rmag_0601</name>
</gene>
<organism>
    <name type="scientific">Ruthia magnifica subsp. Calyptogena magnifica</name>
    <dbReference type="NCBI Taxonomy" id="413404"/>
    <lineage>
        <taxon>Bacteria</taxon>
        <taxon>Pseudomonadati</taxon>
        <taxon>Pseudomonadota</taxon>
        <taxon>Gammaproteobacteria</taxon>
        <taxon>Candidatus Pseudothioglobaceae</taxon>
        <taxon>Candidatus Ruthturnera</taxon>
    </lineage>
</organism>
<dbReference type="EC" id="2.4.2.17" evidence="1"/>
<dbReference type="EMBL" id="CP000488">
    <property type="protein sequence ID" value="ABL02352.1"/>
    <property type="molecule type" value="Genomic_DNA"/>
</dbReference>
<dbReference type="RefSeq" id="WP_011737977.1">
    <property type="nucleotide sequence ID" value="NC_008610.1"/>
</dbReference>
<dbReference type="SMR" id="A1AWP5"/>
<dbReference type="STRING" id="413404.Rmag_0601"/>
<dbReference type="KEGG" id="rma:Rmag_0601"/>
<dbReference type="eggNOG" id="COG0040">
    <property type="taxonomic scope" value="Bacteria"/>
</dbReference>
<dbReference type="HOGENOM" id="CLU_038115_2_0_6"/>
<dbReference type="OrthoDB" id="9801867at2"/>
<dbReference type="UniPathway" id="UPA00031">
    <property type="reaction ID" value="UER00006"/>
</dbReference>
<dbReference type="Proteomes" id="UP000002587">
    <property type="component" value="Chromosome"/>
</dbReference>
<dbReference type="GO" id="GO:0005737">
    <property type="term" value="C:cytoplasm"/>
    <property type="evidence" value="ECO:0007669"/>
    <property type="project" value="UniProtKB-SubCell"/>
</dbReference>
<dbReference type="GO" id="GO:0005524">
    <property type="term" value="F:ATP binding"/>
    <property type="evidence" value="ECO:0007669"/>
    <property type="project" value="UniProtKB-KW"/>
</dbReference>
<dbReference type="GO" id="GO:0003879">
    <property type="term" value="F:ATP phosphoribosyltransferase activity"/>
    <property type="evidence" value="ECO:0007669"/>
    <property type="project" value="UniProtKB-UniRule"/>
</dbReference>
<dbReference type="GO" id="GO:0000105">
    <property type="term" value="P:L-histidine biosynthetic process"/>
    <property type="evidence" value="ECO:0007669"/>
    <property type="project" value="UniProtKB-UniRule"/>
</dbReference>
<dbReference type="CDD" id="cd13595">
    <property type="entry name" value="PBP2_HisGs"/>
    <property type="match status" value="1"/>
</dbReference>
<dbReference type="FunFam" id="3.40.190.10:FF:000011">
    <property type="entry name" value="ATP phosphoribosyltransferase"/>
    <property type="match status" value="1"/>
</dbReference>
<dbReference type="Gene3D" id="3.40.190.10">
    <property type="entry name" value="Periplasmic binding protein-like II"/>
    <property type="match status" value="2"/>
</dbReference>
<dbReference type="HAMAP" id="MF_01018">
    <property type="entry name" value="HisG_Short"/>
    <property type="match status" value="1"/>
</dbReference>
<dbReference type="InterPro" id="IPR013820">
    <property type="entry name" value="ATP_PRibTrfase_cat"/>
</dbReference>
<dbReference type="InterPro" id="IPR018198">
    <property type="entry name" value="ATP_PRibTrfase_CS"/>
</dbReference>
<dbReference type="InterPro" id="IPR001348">
    <property type="entry name" value="ATP_PRibTrfase_HisG"/>
</dbReference>
<dbReference type="InterPro" id="IPR024893">
    <property type="entry name" value="ATP_PRibTrfase_HisG_short"/>
</dbReference>
<dbReference type="NCBIfam" id="TIGR00070">
    <property type="entry name" value="hisG"/>
    <property type="match status" value="1"/>
</dbReference>
<dbReference type="PANTHER" id="PTHR21403:SF8">
    <property type="entry name" value="ATP PHOSPHORIBOSYLTRANSFERASE"/>
    <property type="match status" value="1"/>
</dbReference>
<dbReference type="PANTHER" id="PTHR21403">
    <property type="entry name" value="ATP PHOSPHORIBOSYLTRANSFERASE ATP-PRTASE"/>
    <property type="match status" value="1"/>
</dbReference>
<dbReference type="Pfam" id="PF01634">
    <property type="entry name" value="HisG"/>
    <property type="match status" value="1"/>
</dbReference>
<dbReference type="SUPFAM" id="SSF53850">
    <property type="entry name" value="Periplasmic binding protein-like II"/>
    <property type="match status" value="1"/>
</dbReference>
<dbReference type="PROSITE" id="PS01316">
    <property type="entry name" value="ATP_P_PHORIBOSYLTR"/>
    <property type="match status" value="1"/>
</dbReference>
<sequence length="205" mass="22629">MLTIALSKGRILEQTLPLLEKSGLIIAKEELNSRKLILDTNLTDVQVIIIRATDVPVFVQHGAADIGIAGKDVLLEHGANNLFEVLDLDITKCKLMVAAESKDKLKQNTLKIATKYVNSTKRYFQNKGQSCEIIKLYGAMELAPKVGLAHCIVDLVDTGNTLKANGLIAVERIEEISSRLVVNTASFKTKNAQIKSWIQNIEYNL</sequence>
<keyword id="KW-0028">Amino-acid biosynthesis</keyword>
<keyword id="KW-0067">ATP-binding</keyword>
<keyword id="KW-0963">Cytoplasm</keyword>
<keyword id="KW-0328">Glycosyltransferase</keyword>
<keyword id="KW-0368">Histidine biosynthesis</keyword>
<keyword id="KW-0547">Nucleotide-binding</keyword>
<keyword id="KW-0808">Transferase</keyword>
<name>HIS1_RUTMC</name>
<comment type="function">
    <text evidence="1">Catalyzes the condensation of ATP and 5-phosphoribose 1-diphosphate to form N'-(5'-phosphoribosyl)-ATP (PR-ATP). Has a crucial role in the pathway because the rate of histidine biosynthesis seems to be controlled primarily by regulation of HisG enzymatic activity.</text>
</comment>
<comment type="catalytic activity">
    <reaction evidence="1">
        <text>1-(5-phospho-beta-D-ribosyl)-ATP + diphosphate = 5-phospho-alpha-D-ribose 1-diphosphate + ATP</text>
        <dbReference type="Rhea" id="RHEA:18473"/>
        <dbReference type="ChEBI" id="CHEBI:30616"/>
        <dbReference type="ChEBI" id="CHEBI:33019"/>
        <dbReference type="ChEBI" id="CHEBI:58017"/>
        <dbReference type="ChEBI" id="CHEBI:73183"/>
        <dbReference type="EC" id="2.4.2.17"/>
    </reaction>
</comment>
<comment type="pathway">
    <text evidence="1">Amino-acid biosynthesis; L-histidine biosynthesis; L-histidine from 5-phospho-alpha-D-ribose 1-diphosphate: step 1/9.</text>
</comment>
<comment type="subunit">
    <text evidence="1">Heteromultimer composed of HisG and HisZ subunits.</text>
</comment>
<comment type="subcellular location">
    <subcellularLocation>
        <location evidence="1">Cytoplasm</location>
    </subcellularLocation>
</comment>
<comment type="domain">
    <text>Lacks the C-terminal regulatory region which is replaced by HisZ.</text>
</comment>
<comment type="similarity">
    <text evidence="1">Belongs to the ATP phosphoribosyltransferase family. Short subfamily.</text>
</comment>
<protein>
    <recommendedName>
        <fullName evidence="1">ATP phosphoribosyltransferase</fullName>
        <shortName evidence="1">ATP-PRT</shortName>
        <shortName evidence="1">ATP-PRTase</shortName>
        <ecNumber evidence="1">2.4.2.17</ecNumber>
    </recommendedName>
</protein>
<accession>A1AWP5</accession>